<gene>
    <name type="primary">LPXC1</name>
    <name type="ordered locus">At1g24793</name>
    <name type="ORF">F5A9.18</name>
</gene>
<protein>
    <recommendedName>
        <fullName evidence="1">Probable UDP-3-O-acyl-N-acetylglucosamine deacetylase 1, mitochondrial</fullName>
        <shortName evidence="1">UDP-3-O-acyl-GlcNAc deacetylase 1</shortName>
        <ecNumber evidence="1">3.5.1.108</ecNumber>
    </recommendedName>
    <alternativeName>
        <fullName>Protein LIPID X C1</fullName>
        <shortName>AtLpxC1</shortName>
    </alternativeName>
    <alternativeName>
        <fullName evidence="1">UDP-3-O-[R-3-hydroxymyristoyl]-N-acetylglucosamine deacetylase 1</fullName>
    </alternativeName>
</protein>
<reference key="1">
    <citation type="journal article" date="2000" name="Nature">
        <title>Sequence and analysis of chromosome 1 of the plant Arabidopsis thaliana.</title>
        <authorList>
            <person name="Theologis A."/>
            <person name="Ecker J.R."/>
            <person name="Palm C.J."/>
            <person name="Federspiel N.A."/>
            <person name="Kaul S."/>
            <person name="White O."/>
            <person name="Alonso J."/>
            <person name="Altafi H."/>
            <person name="Araujo R."/>
            <person name="Bowman C.L."/>
            <person name="Brooks S.Y."/>
            <person name="Buehler E."/>
            <person name="Chan A."/>
            <person name="Chao Q."/>
            <person name="Chen H."/>
            <person name="Cheuk R.F."/>
            <person name="Chin C.W."/>
            <person name="Chung M.K."/>
            <person name="Conn L."/>
            <person name="Conway A.B."/>
            <person name="Conway A.R."/>
            <person name="Creasy T.H."/>
            <person name="Dewar K."/>
            <person name="Dunn P."/>
            <person name="Etgu P."/>
            <person name="Feldblyum T.V."/>
            <person name="Feng J.-D."/>
            <person name="Fong B."/>
            <person name="Fujii C.Y."/>
            <person name="Gill J.E."/>
            <person name="Goldsmith A.D."/>
            <person name="Haas B."/>
            <person name="Hansen N.F."/>
            <person name="Hughes B."/>
            <person name="Huizar L."/>
            <person name="Hunter J.L."/>
            <person name="Jenkins J."/>
            <person name="Johnson-Hopson C."/>
            <person name="Khan S."/>
            <person name="Khaykin E."/>
            <person name="Kim C.J."/>
            <person name="Koo H.L."/>
            <person name="Kremenetskaia I."/>
            <person name="Kurtz D.B."/>
            <person name="Kwan A."/>
            <person name="Lam B."/>
            <person name="Langin-Hooper S."/>
            <person name="Lee A."/>
            <person name="Lee J.M."/>
            <person name="Lenz C.A."/>
            <person name="Li J.H."/>
            <person name="Li Y.-P."/>
            <person name="Lin X."/>
            <person name="Liu S.X."/>
            <person name="Liu Z.A."/>
            <person name="Luros J.S."/>
            <person name="Maiti R."/>
            <person name="Marziali A."/>
            <person name="Militscher J."/>
            <person name="Miranda M."/>
            <person name="Nguyen M."/>
            <person name="Nierman W.C."/>
            <person name="Osborne B.I."/>
            <person name="Pai G."/>
            <person name="Peterson J."/>
            <person name="Pham P.K."/>
            <person name="Rizzo M."/>
            <person name="Rooney T."/>
            <person name="Rowley D."/>
            <person name="Sakano H."/>
            <person name="Salzberg S.L."/>
            <person name="Schwartz J.R."/>
            <person name="Shinn P."/>
            <person name="Southwick A.M."/>
            <person name="Sun H."/>
            <person name="Tallon L.J."/>
            <person name="Tambunga G."/>
            <person name="Toriumi M.J."/>
            <person name="Town C.D."/>
            <person name="Utterback T."/>
            <person name="Van Aken S."/>
            <person name="Vaysberg M."/>
            <person name="Vysotskaia V.S."/>
            <person name="Walker M."/>
            <person name="Wu D."/>
            <person name="Yu G."/>
            <person name="Fraser C.M."/>
            <person name="Venter J.C."/>
            <person name="Davis R.W."/>
        </authorList>
    </citation>
    <scope>NUCLEOTIDE SEQUENCE [LARGE SCALE GENOMIC DNA]</scope>
    <source>
        <strain>cv. Columbia</strain>
    </source>
</reference>
<reference key="2">
    <citation type="journal article" date="2017" name="Plant J.">
        <title>Araport11: a complete reannotation of the Arabidopsis thaliana reference genome.</title>
        <authorList>
            <person name="Cheng C.Y."/>
            <person name="Krishnakumar V."/>
            <person name="Chan A.P."/>
            <person name="Thibaud-Nissen F."/>
            <person name="Schobel S."/>
            <person name="Town C.D."/>
        </authorList>
    </citation>
    <scope>GENOME REANNOTATION</scope>
    <source>
        <strain>cv. Columbia</strain>
    </source>
</reference>
<reference key="3">
    <citation type="journal article" date="2003" name="Science">
        <title>Empirical analysis of transcriptional activity in the Arabidopsis genome.</title>
        <authorList>
            <person name="Yamada K."/>
            <person name="Lim J."/>
            <person name="Dale J.M."/>
            <person name="Chen H."/>
            <person name="Shinn P."/>
            <person name="Palm C.J."/>
            <person name="Southwick A.M."/>
            <person name="Wu H.C."/>
            <person name="Kim C.J."/>
            <person name="Nguyen M."/>
            <person name="Pham P.K."/>
            <person name="Cheuk R.F."/>
            <person name="Karlin-Newmann G."/>
            <person name="Liu S.X."/>
            <person name="Lam B."/>
            <person name="Sakano H."/>
            <person name="Wu T."/>
            <person name="Yu G."/>
            <person name="Miranda M."/>
            <person name="Quach H.L."/>
            <person name="Tripp M."/>
            <person name="Chang C.H."/>
            <person name="Lee J.M."/>
            <person name="Toriumi M.J."/>
            <person name="Chan M.M."/>
            <person name="Tang C.C."/>
            <person name="Onodera C.S."/>
            <person name="Deng J.M."/>
            <person name="Akiyama K."/>
            <person name="Ansari Y."/>
            <person name="Arakawa T."/>
            <person name="Banh J."/>
            <person name="Banno F."/>
            <person name="Bowser L."/>
            <person name="Brooks S.Y."/>
            <person name="Carninci P."/>
            <person name="Chao Q."/>
            <person name="Choy N."/>
            <person name="Enju A."/>
            <person name="Goldsmith A.D."/>
            <person name="Gurjal M."/>
            <person name="Hansen N.F."/>
            <person name="Hayashizaki Y."/>
            <person name="Johnson-Hopson C."/>
            <person name="Hsuan V.W."/>
            <person name="Iida K."/>
            <person name="Karnes M."/>
            <person name="Khan S."/>
            <person name="Koesema E."/>
            <person name="Ishida J."/>
            <person name="Jiang P.X."/>
            <person name="Jones T."/>
            <person name="Kawai J."/>
            <person name="Kamiya A."/>
            <person name="Meyers C."/>
            <person name="Nakajima M."/>
            <person name="Narusaka M."/>
            <person name="Seki M."/>
            <person name="Sakurai T."/>
            <person name="Satou M."/>
            <person name="Tamse R."/>
            <person name="Vaysberg M."/>
            <person name="Wallender E.K."/>
            <person name="Wong C."/>
            <person name="Yamamura Y."/>
            <person name="Yuan S."/>
            <person name="Shinozaki K."/>
            <person name="Davis R.W."/>
            <person name="Theologis A."/>
            <person name="Ecker J.R."/>
        </authorList>
    </citation>
    <scope>NUCLEOTIDE SEQUENCE [LARGE SCALE MRNA] (ISOFORM 2)</scope>
    <source>
        <strain>cv. Columbia</strain>
    </source>
</reference>
<reference key="4">
    <citation type="submission" date="2005-03" db="EMBL/GenBank/DDBJ databases">
        <title>Large-scale analysis of RIKEN Arabidopsis full-length (RAFL) cDNAs.</title>
        <authorList>
            <person name="Totoki Y."/>
            <person name="Seki M."/>
            <person name="Ishida J."/>
            <person name="Nakajima M."/>
            <person name="Enju A."/>
            <person name="Kamiya A."/>
            <person name="Narusaka M."/>
            <person name="Shin-i T."/>
            <person name="Nakagawa M."/>
            <person name="Sakamoto N."/>
            <person name="Oishi K."/>
            <person name="Kohara Y."/>
            <person name="Kobayashi M."/>
            <person name="Toyoda A."/>
            <person name="Sakaki Y."/>
            <person name="Sakurai T."/>
            <person name="Iida K."/>
            <person name="Akiyama K."/>
            <person name="Satou M."/>
            <person name="Toyoda T."/>
            <person name="Konagaya A."/>
            <person name="Carninci P."/>
            <person name="Kawai J."/>
            <person name="Hayashizaki Y."/>
            <person name="Shinozaki K."/>
        </authorList>
    </citation>
    <scope>NUCLEOTIDE SEQUENCE [LARGE SCALE MRNA] (ISOFORMS 1 AND 3)</scope>
    <source>
        <strain>cv. Columbia</strain>
    </source>
</reference>
<reference key="5">
    <citation type="journal article" date="2011" name="Proc. Natl. Acad. Sci. U.S.A.">
        <title>Pathway for lipid A biosynthesis in Arabidopsis thaliana resembling that of Escherichia coli.</title>
        <authorList>
            <person name="Li C."/>
            <person name="Guan Z."/>
            <person name="Liu D."/>
            <person name="Raetz C.R."/>
        </authorList>
    </citation>
    <scope>PATHWAY</scope>
    <scope>SUBCELLULAR LOCATION</scope>
    <scope>GENE FAMILY</scope>
    <scope>NOMENCLATURE</scope>
</reference>
<reference key="6">
    <citation type="journal article" date="2015" name="J. Exp. Bot.">
        <title>Identification of cleavage sites and substrate proteins for two mitochondrial intermediate peptidases in Arabidopsis thaliana.</title>
        <authorList>
            <person name="Carrie C."/>
            <person name="Venne A.S."/>
            <person name="Zahedi R.P."/>
            <person name="Soll J."/>
        </authorList>
    </citation>
    <scope>IDENTIFICATION BY MASS SPECTROMETRY</scope>
    <scope>CLEAVAGE OF TRANSIT PEPTIDE AFTER TYR-21</scope>
</reference>
<comment type="function">
    <text evidence="6">Involved in the biosynthesis of lipid A, a phosphorylated glycolipid that in bacteria anchors the lipopolysaccharide to the outer membrane of the cell. Lipid A-like molecules in plants may serve as structural components of the outer membranes of mitochondria and/or chloroplasts, or may be involved in signal transduction or plant defense responses (Potential).</text>
</comment>
<comment type="catalytic activity">
    <reaction evidence="1">
        <text>a UDP-3-O-[(3R)-3-hydroxyacyl]-N-acetyl-alpha-D-glucosamine + H2O = a UDP-3-O-[(3R)-3-hydroxyacyl]-alpha-D-glucosamine + acetate</text>
        <dbReference type="Rhea" id="RHEA:67816"/>
        <dbReference type="ChEBI" id="CHEBI:15377"/>
        <dbReference type="ChEBI" id="CHEBI:30089"/>
        <dbReference type="ChEBI" id="CHEBI:137740"/>
        <dbReference type="ChEBI" id="CHEBI:173225"/>
        <dbReference type="EC" id="3.5.1.108"/>
    </reaction>
</comment>
<comment type="cofactor">
    <cofactor evidence="1">
        <name>Zn(2+)</name>
        <dbReference type="ChEBI" id="CHEBI:29105"/>
    </cofactor>
</comment>
<comment type="pathway">
    <text evidence="2">Glycolipid biosynthesis; lipid IV(A) biosynthesis; lipid IV(A) from (3R)-3-hydroxytetradecanoyl-[acyl-carrier-protein] and UDP-N-acetyl-alpha-D-glucosamine: step 2/6.</text>
</comment>
<comment type="subcellular location">
    <subcellularLocation>
        <location evidence="2 8">Mitochondrion</location>
    </subcellularLocation>
</comment>
<comment type="alternative products">
    <event type="alternative splicing"/>
    <isoform>
        <id>F4IAT8-1</id>
        <name>1</name>
        <sequence type="displayed"/>
    </isoform>
    <isoform>
        <id>F4IAT8-2</id>
        <name>2</name>
        <sequence type="described" ref="VSP_022944 VSP_022945"/>
    </isoform>
    <isoform>
        <id>F4IAT8-3</id>
        <name>3</name>
        <sequence type="described" ref="VSP_034100"/>
    </isoform>
</comment>
<comment type="miscellaneous">
    <text evidence="7">Plants silencing LPXC do not have altered morphology compared to wild-type plants when grown under normal growth conditions, but they do not accumulate 2,3-diacylglucosamine-1-phosphate.</text>
</comment>
<comment type="miscellaneous">
    <molecule>Isoform 2</molecule>
    <text evidence="6">May be due to a competing donor splice site.</text>
</comment>
<comment type="miscellaneous">
    <molecule>Isoform 3</molecule>
    <text evidence="6">May be due to intron retention.</text>
</comment>
<comment type="similarity">
    <text evidence="6">Belongs to the LpxC family.</text>
</comment>
<comment type="sequence caution" evidence="6">
    <conflict type="erroneous gene model prediction">
        <sequence resource="EMBL-CDS" id="AAG03124"/>
    </conflict>
    <text>The predicted gene has been split into 2 genes: At1g24793 and At1g24800.</text>
</comment>
<sequence length="326" mass="35717">MRLPVTVKATKPSFLVIWIRYSSAASSPTVSLNPSGRLQQTLAGSVEVKGKSLHSGKFSTVKLNPEIAGAGRFFEFRSRFIPASIEFAQESPLCTTLLKDELKIRTVEHLLSALEAKGVDNCRIQIESESSDDREVEVPIFDGSAKEWVDAIQGVGINAAQNHDGESVEKMVAHVNKPVYVCKNDTFVAAFPALETRITCGIDFPQVPAIGCQWFSWRPIHESSFAKDIASSRTFCVYEEVERMREAGLIKGGSLDNAIVCSAEHGWMNPPLRFDDEACRHKILDLIGDLSLVSRGGNGGLPVAHIVAYKAGHALHTDLARHLTMD</sequence>
<feature type="transit peptide" description="Mitochondrion" evidence="3">
    <location>
        <begin position="1"/>
        <end position="21"/>
    </location>
</feature>
<feature type="chain" id="PRO_0000274929" description="Probable UDP-3-O-acyl-N-acetylglucosamine deacetylase 1, mitochondrial">
    <location>
        <begin position="22"/>
        <end position="326"/>
    </location>
</feature>
<feature type="binding site" evidence="1">
    <location>
        <position position="109"/>
    </location>
    <ligand>
        <name>Zn(2+)</name>
        <dbReference type="ChEBI" id="CHEBI:29105"/>
    </ligand>
</feature>
<feature type="binding site" evidence="1">
    <location>
        <position position="281"/>
    </location>
    <ligand>
        <name>Zn(2+)</name>
        <dbReference type="ChEBI" id="CHEBI:29105"/>
    </ligand>
</feature>
<feature type="binding site" evidence="1">
    <location>
        <position position="285"/>
    </location>
    <ligand>
        <name>Zn(2+)</name>
        <dbReference type="ChEBI" id="CHEBI:29105"/>
    </ligand>
</feature>
<feature type="splice variant" id="VSP_034100" description="In isoform 3." evidence="5">
    <location>
        <begin position="1"/>
        <end position="170"/>
    </location>
</feature>
<feature type="splice variant" id="VSP_022944" description="In isoform 2." evidence="4">
    <original>CSAEH</original>
    <variation>SLSMD</variation>
    <location>
        <begin position="261"/>
        <end position="265"/>
    </location>
</feature>
<feature type="splice variant" id="VSP_022945" description="In isoform 2." evidence="4">
    <location>
        <begin position="267"/>
        <end position="326"/>
    </location>
</feature>
<feature type="sequence conflict" description="In Ref. 3; BAD94001." evidence="6" ref="3">
    <original>S</original>
    <variation>P</variation>
    <location>
        <position position="84"/>
    </location>
</feature>
<accession>F4IAT8</accession>
<accession>B3H6R1</accession>
<accession>F4IAW2</accession>
<accession>P0C2G7</accession>
<accession>Q56X64</accession>
<accession>Q56XG5</accession>
<accession>Q7GAV1</accession>
<accession>Q8GXP0</accession>
<accession>Q8LPR6</accession>
<accession>Q9FE36</accession>
<accession>Q9FXK3</accession>
<accession>Q9FXK7</accession>
<evidence type="ECO:0000250" key="1">
    <source>
        <dbReference type="UniProtKB" id="P0A725"/>
    </source>
</evidence>
<evidence type="ECO:0000269" key="2">
    <source>
    </source>
</evidence>
<evidence type="ECO:0000269" key="3">
    <source>
    </source>
</evidence>
<evidence type="ECO:0000303" key="4">
    <source>
    </source>
</evidence>
<evidence type="ECO:0000303" key="5">
    <source ref="4"/>
</evidence>
<evidence type="ECO:0000305" key="6"/>
<evidence type="ECO:0000305" key="7">
    <source>
    </source>
</evidence>
<evidence type="ECO:0000305" key="8">
    <source>
    </source>
</evidence>
<name>LPXC1_ARATH</name>
<organism>
    <name type="scientific">Arabidopsis thaliana</name>
    <name type="common">Mouse-ear cress</name>
    <dbReference type="NCBI Taxonomy" id="3702"/>
    <lineage>
        <taxon>Eukaryota</taxon>
        <taxon>Viridiplantae</taxon>
        <taxon>Streptophyta</taxon>
        <taxon>Embryophyta</taxon>
        <taxon>Tracheophyta</taxon>
        <taxon>Spermatophyta</taxon>
        <taxon>Magnoliopsida</taxon>
        <taxon>eudicotyledons</taxon>
        <taxon>Gunneridae</taxon>
        <taxon>Pentapetalae</taxon>
        <taxon>rosids</taxon>
        <taxon>malvids</taxon>
        <taxon>Brassicales</taxon>
        <taxon>Brassicaceae</taxon>
        <taxon>Camelineae</taxon>
        <taxon>Arabidopsis</taxon>
    </lineage>
</organism>
<proteinExistence type="evidence at protein level"/>
<keyword id="KW-0025">Alternative splicing</keyword>
<keyword id="KW-0378">Hydrolase</keyword>
<keyword id="KW-0441">Lipid A biosynthesis</keyword>
<keyword id="KW-0444">Lipid biosynthesis</keyword>
<keyword id="KW-0443">Lipid metabolism</keyword>
<keyword id="KW-0479">Metal-binding</keyword>
<keyword id="KW-0496">Mitochondrion</keyword>
<keyword id="KW-1185">Reference proteome</keyword>
<keyword id="KW-0809">Transit peptide</keyword>
<keyword id="KW-0862">Zinc</keyword>
<dbReference type="EC" id="3.5.1.108" evidence="1"/>
<dbReference type="EMBL" id="AC004133">
    <property type="protein sequence ID" value="AAG03124.1"/>
    <property type="status" value="ALT_SEQ"/>
    <property type="molecule type" value="Genomic_DNA"/>
</dbReference>
<dbReference type="EMBL" id="CP002684">
    <property type="protein sequence ID" value="AEE30562.1"/>
    <property type="molecule type" value="Genomic_DNA"/>
</dbReference>
<dbReference type="EMBL" id="AY094436">
    <property type="protein sequence ID" value="AAM19808.1"/>
    <property type="molecule type" value="mRNA"/>
</dbReference>
<dbReference type="EMBL" id="AK221709">
    <property type="protein sequence ID" value="BAD95433.1"/>
    <property type="molecule type" value="mRNA"/>
</dbReference>
<dbReference type="EMBL" id="AK221813">
    <property type="protein sequence ID" value="BAD94001.1"/>
    <property type="molecule type" value="mRNA"/>
</dbReference>
<dbReference type="RefSeq" id="NP_001117349.4">
    <molecule id="F4IAT8-1"/>
    <property type="nucleotide sequence ID" value="NM_001123877.5"/>
</dbReference>
<dbReference type="RefSeq" id="NP_001185090.1">
    <molecule id="F4IAT8-1"/>
    <property type="nucleotide sequence ID" value="NM_001198161.1"/>
</dbReference>
<dbReference type="RefSeq" id="NP_173874.2">
    <molecule id="F4IAT8-1"/>
    <property type="nucleotide sequence ID" value="NM_102312.3"/>
</dbReference>
<dbReference type="RefSeq" id="NP_849706.4">
    <molecule id="F4IAT8-1"/>
    <property type="nucleotide sequence ID" value="NM_179375.4"/>
</dbReference>
<dbReference type="SMR" id="F4IAT8"/>
<dbReference type="FunCoup" id="F4IAT8">
    <property type="interactions" value="7"/>
</dbReference>
<dbReference type="STRING" id="3702.F4IAT8"/>
<dbReference type="PaxDb" id="3702-AT1G24793.1"/>
<dbReference type="EnsemblPlants" id="AT1G24793.1">
    <property type="protein sequence ID" value="AT1G24793.1"/>
    <property type="gene ID" value="AT1G24793"/>
</dbReference>
<dbReference type="EnsemblPlants" id="AT1G25054.1">
    <property type="protein sequence ID" value="AT1G25054.1"/>
    <property type="gene ID" value="AT1G25054"/>
</dbReference>
<dbReference type="EnsemblPlants" id="AT1G25145.1">
    <property type="protein sequence ID" value="AT1G25145.1"/>
    <property type="gene ID" value="AT1G25145"/>
</dbReference>
<dbReference type="EnsemblPlants" id="AT1G25210.2">
    <property type="protein sequence ID" value="AT1G25210.2"/>
    <property type="gene ID" value="AT1G25210"/>
</dbReference>
<dbReference type="GeneID" id="839084"/>
<dbReference type="Gramene" id="AT1G24793.1">
    <property type="protein sequence ID" value="AT1G24793.1"/>
    <property type="gene ID" value="AT1G24793"/>
</dbReference>
<dbReference type="Gramene" id="AT1G25054.1">
    <property type="protein sequence ID" value="AT1G25054.1"/>
    <property type="gene ID" value="AT1G25054"/>
</dbReference>
<dbReference type="Gramene" id="AT1G25145.1">
    <property type="protein sequence ID" value="AT1G25145.1"/>
    <property type="gene ID" value="AT1G25145"/>
</dbReference>
<dbReference type="Gramene" id="AT1G25210.2">
    <property type="protein sequence ID" value="AT1G25210.2"/>
    <property type="gene ID" value="AT1G25210"/>
</dbReference>
<dbReference type="KEGG" id="ath:AT1G24793"/>
<dbReference type="KEGG" id="ath:AT1G25054"/>
<dbReference type="KEGG" id="ath:AT1G25145"/>
<dbReference type="KEGG" id="ath:AT1G25210"/>
<dbReference type="Araport" id="AT1G24793"/>
<dbReference type="TAIR" id="AT1G24793">
    <property type="gene designation" value="LPXC1"/>
</dbReference>
<dbReference type="eggNOG" id="ENOG502QT9Y">
    <property type="taxonomic scope" value="Eukaryota"/>
</dbReference>
<dbReference type="HOGENOM" id="CLU_046528_0_0_1"/>
<dbReference type="InParanoid" id="F4IAT8"/>
<dbReference type="OMA" id="IVFYRSD"/>
<dbReference type="PhylomeDB" id="F4IAT8"/>
<dbReference type="UniPathway" id="UPA00359">
    <property type="reaction ID" value="UER00478"/>
</dbReference>
<dbReference type="PRO" id="PR:F4IAT8"/>
<dbReference type="Proteomes" id="UP000006548">
    <property type="component" value="Chromosome 1"/>
</dbReference>
<dbReference type="ExpressionAtlas" id="F4IAT8">
    <property type="expression patterns" value="baseline"/>
</dbReference>
<dbReference type="GO" id="GO:0016020">
    <property type="term" value="C:membrane"/>
    <property type="evidence" value="ECO:0007669"/>
    <property type="project" value="GOC"/>
</dbReference>
<dbReference type="GO" id="GO:0005739">
    <property type="term" value="C:mitochondrion"/>
    <property type="evidence" value="ECO:0000314"/>
    <property type="project" value="UniProtKB"/>
</dbReference>
<dbReference type="GO" id="GO:0046872">
    <property type="term" value="F:metal ion binding"/>
    <property type="evidence" value="ECO:0007669"/>
    <property type="project" value="UniProtKB-KW"/>
</dbReference>
<dbReference type="GO" id="GO:0103117">
    <property type="term" value="F:UDP-3-O-acyl-N-acetylglucosamine deacetylase activity"/>
    <property type="evidence" value="ECO:0000315"/>
    <property type="project" value="UniProtKB"/>
</dbReference>
<dbReference type="GO" id="GO:0009245">
    <property type="term" value="P:lipid A biosynthetic process"/>
    <property type="evidence" value="ECO:0007669"/>
    <property type="project" value="UniProtKB-KW"/>
</dbReference>
<dbReference type="GO" id="GO:2001289">
    <property type="term" value="P:lipid X metabolic process"/>
    <property type="evidence" value="ECO:0000315"/>
    <property type="project" value="UniProtKB"/>
</dbReference>
<dbReference type="FunFam" id="3.30.230.20:FF:000002">
    <property type="entry name" value="Probable UDP-3-O-acyl-N-acetylglucosamine deacetylase 2, mitochondrial"/>
    <property type="match status" value="1"/>
</dbReference>
<dbReference type="FunFam" id="3.30.1700.10:FF:000002">
    <property type="entry name" value="Probable UDP-3-O-acyl-N-acetylglucosamine deacetylase 3, mitochondrial"/>
    <property type="match status" value="1"/>
</dbReference>
<dbReference type="Gene3D" id="3.30.230.20">
    <property type="entry name" value="lpxc deacetylase, domain 1"/>
    <property type="match status" value="1"/>
</dbReference>
<dbReference type="Gene3D" id="3.30.1700.10">
    <property type="entry name" value="lpxc deacetylase, domain 2"/>
    <property type="match status" value="1"/>
</dbReference>
<dbReference type="HAMAP" id="MF_00388">
    <property type="entry name" value="LpxC"/>
    <property type="match status" value="1"/>
</dbReference>
<dbReference type="InterPro" id="IPR020568">
    <property type="entry name" value="Ribosomal_Su5_D2-typ_SF"/>
</dbReference>
<dbReference type="InterPro" id="IPR004463">
    <property type="entry name" value="UDP-acyl_GlcNac_deAcase"/>
</dbReference>
<dbReference type="InterPro" id="IPR011334">
    <property type="entry name" value="UDP-acyl_GlcNac_deAcase_C"/>
</dbReference>
<dbReference type="InterPro" id="IPR015870">
    <property type="entry name" value="UDP-acyl_N-AcGlcN_deAcase_N"/>
</dbReference>
<dbReference type="NCBIfam" id="TIGR00325">
    <property type="entry name" value="lpxC"/>
    <property type="match status" value="1"/>
</dbReference>
<dbReference type="PANTHER" id="PTHR33694">
    <property type="entry name" value="UDP-3-O-ACYL-N-ACETYLGLUCOSAMINE DEACETYLASE 1, MITOCHONDRIAL-RELATED"/>
    <property type="match status" value="1"/>
</dbReference>
<dbReference type="PANTHER" id="PTHR33694:SF1">
    <property type="entry name" value="UDP-3-O-ACYL-N-ACETYLGLUCOSAMINE DEACETYLASE 1, MITOCHONDRIAL-RELATED"/>
    <property type="match status" value="1"/>
</dbReference>
<dbReference type="Pfam" id="PF03331">
    <property type="entry name" value="LpxC"/>
    <property type="match status" value="1"/>
</dbReference>
<dbReference type="SUPFAM" id="SSF54211">
    <property type="entry name" value="Ribosomal protein S5 domain 2-like"/>
    <property type="match status" value="2"/>
</dbReference>